<keyword id="KW-0066">ATP synthesis</keyword>
<keyword id="KW-1003">Cell membrane</keyword>
<keyword id="KW-0138">CF(0)</keyword>
<keyword id="KW-0375">Hydrogen ion transport</keyword>
<keyword id="KW-0406">Ion transport</keyword>
<keyword id="KW-0446">Lipid-binding</keyword>
<keyword id="KW-0472">Membrane</keyword>
<keyword id="KW-0812">Transmembrane</keyword>
<keyword id="KW-1133">Transmembrane helix</keyword>
<keyword id="KW-0813">Transport</keyword>
<protein>
    <recommendedName>
        <fullName evidence="1">ATP synthase subunit c</fullName>
    </recommendedName>
    <alternativeName>
        <fullName evidence="1">ATP synthase F(0) sector subunit c</fullName>
    </alternativeName>
    <alternativeName>
        <fullName evidence="1">F-type ATPase subunit c</fullName>
        <shortName evidence="1">F-ATPase subunit c</shortName>
    </alternativeName>
    <alternativeName>
        <fullName evidence="1">Lipid-binding protein</fullName>
    </alternativeName>
</protein>
<accession>A3Q3B6</accession>
<gene>
    <name evidence="1" type="primary">atpE</name>
    <name type="ordered locus">Mjls_3867</name>
</gene>
<feature type="chain" id="PRO_1000184418" description="ATP synthase subunit c">
    <location>
        <begin position="1"/>
        <end position="81"/>
    </location>
</feature>
<feature type="transmembrane region" description="Helical" evidence="1">
    <location>
        <begin position="5"/>
        <end position="25"/>
    </location>
</feature>
<feature type="transmembrane region" description="Helical" evidence="1">
    <location>
        <begin position="57"/>
        <end position="77"/>
    </location>
</feature>
<feature type="site" description="Reversibly protonated during proton transport" evidence="1">
    <location>
        <position position="61"/>
    </location>
</feature>
<evidence type="ECO:0000255" key="1">
    <source>
        <dbReference type="HAMAP-Rule" id="MF_01396"/>
    </source>
</evidence>
<reference key="1">
    <citation type="submission" date="2007-02" db="EMBL/GenBank/DDBJ databases">
        <title>Complete sequence of Mycobacterium sp. JLS.</title>
        <authorList>
            <consortium name="US DOE Joint Genome Institute"/>
            <person name="Copeland A."/>
            <person name="Lucas S."/>
            <person name="Lapidus A."/>
            <person name="Barry K."/>
            <person name="Detter J.C."/>
            <person name="Glavina del Rio T."/>
            <person name="Hammon N."/>
            <person name="Israni S."/>
            <person name="Dalin E."/>
            <person name="Tice H."/>
            <person name="Pitluck S."/>
            <person name="Chain P."/>
            <person name="Malfatti S."/>
            <person name="Shin M."/>
            <person name="Vergez L."/>
            <person name="Schmutz J."/>
            <person name="Larimer F."/>
            <person name="Land M."/>
            <person name="Hauser L."/>
            <person name="Kyrpides N."/>
            <person name="Mikhailova N."/>
            <person name="Miller C.D."/>
            <person name="Anderson A.J."/>
            <person name="Sims R.C."/>
            <person name="Richardson P."/>
        </authorList>
    </citation>
    <scope>NUCLEOTIDE SEQUENCE [LARGE SCALE GENOMIC DNA]</scope>
    <source>
        <strain>JLS</strain>
    </source>
</reference>
<organism>
    <name type="scientific">Mycobacterium sp. (strain JLS)</name>
    <dbReference type="NCBI Taxonomy" id="164757"/>
    <lineage>
        <taxon>Bacteria</taxon>
        <taxon>Bacillati</taxon>
        <taxon>Actinomycetota</taxon>
        <taxon>Actinomycetes</taxon>
        <taxon>Mycobacteriales</taxon>
        <taxon>Mycobacteriaceae</taxon>
        <taxon>Mycobacterium</taxon>
    </lineage>
</organism>
<sequence>MDPTIAAGALIGGGLIMAGGAIGAGIGDGIAGNALIAGIARQPEAQGRLFTPFFITVGLVEAAYFINLAFMALFVFATPVA</sequence>
<comment type="function">
    <text evidence="1">F(1)F(0) ATP synthase produces ATP from ADP in the presence of a proton or sodium gradient. F-type ATPases consist of two structural domains, F(1) containing the extramembraneous catalytic core and F(0) containing the membrane proton channel, linked together by a central stalk and a peripheral stalk. During catalysis, ATP synthesis in the catalytic domain of F(1) is coupled via a rotary mechanism of the central stalk subunits to proton translocation.</text>
</comment>
<comment type="function">
    <text evidence="1">Key component of the F(0) channel; it plays a direct role in translocation across the membrane. A homomeric c-ring of between 10-14 subunits forms the central stalk rotor element with the F(1) delta and epsilon subunits.</text>
</comment>
<comment type="subunit">
    <text evidence="1">F-type ATPases have 2 components, F(1) - the catalytic core - and F(0) - the membrane proton channel. F(1) has five subunits: alpha(3), beta(3), gamma(1), delta(1), epsilon(1). F(0) has three main subunits: a(1), b(2) and c(10-14). The alpha and beta chains form an alternating ring which encloses part of the gamma chain. F(1) is attached to F(0) by a central stalk formed by the gamma and epsilon chains, while a peripheral stalk is formed by the delta and b chains.</text>
</comment>
<comment type="subcellular location">
    <subcellularLocation>
        <location evidence="1">Cell membrane</location>
        <topology evidence="1">Multi-pass membrane protein</topology>
    </subcellularLocation>
</comment>
<comment type="similarity">
    <text evidence="1">Belongs to the ATPase C chain family.</text>
</comment>
<proteinExistence type="inferred from homology"/>
<name>ATPL_MYCSJ</name>
<dbReference type="EMBL" id="CP000580">
    <property type="protein sequence ID" value="ABN99643.1"/>
    <property type="molecule type" value="Genomic_DNA"/>
</dbReference>
<dbReference type="SMR" id="A3Q3B6"/>
<dbReference type="KEGG" id="mjl:Mjls_3867"/>
<dbReference type="HOGENOM" id="CLU_148047_1_2_11"/>
<dbReference type="BioCyc" id="MSP164757:G1G8C-3907-MONOMER"/>
<dbReference type="GO" id="GO:0005886">
    <property type="term" value="C:plasma membrane"/>
    <property type="evidence" value="ECO:0007669"/>
    <property type="project" value="UniProtKB-SubCell"/>
</dbReference>
<dbReference type="GO" id="GO:0045259">
    <property type="term" value="C:proton-transporting ATP synthase complex"/>
    <property type="evidence" value="ECO:0007669"/>
    <property type="project" value="UniProtKB-KW"/>
</dbReference>
<dbReference type="GO" id="GO:0033177">
    <property type="term" value="C:proton-transporting two-sector ATPase complex, proton-transporting domain"/>
    <property type="evidence" value="ECO:0007669"/>
    <property type="project" value="InterPro"/>
</dbReference>
<dbReference type="GO" id="GO:0008289">
    <property type="term" value="F:lipid binding"/>
    <property type="evidence" value="ECO:0007669"/>
    <property type="project" value="UniProtKB-KW"/>
</dbReference>
<dbReference type="GO" id="GO:0046933">
    <property type="term" value="F:proton-transporting ATP synthase activity, rotational mechanism"/>
    <property type="evidence" value="ECO:0007669"/>
    <property type="project" value="UniProtKB-UniRule"/>
</dbReference>
<dbReference type="Gene3D" id="1.20.20.10">
    <property type="entry name" value="F1F0 ATP synthase subunit C"/>
    <property type="match status" value="1"/>
</dbReference>
<dbReference type="HAMAP" id="MF_01396">
    <property type="entry name" value="ATP_synth_c_bact"/>
    <property type="match status" value="1"/>
</dbReference>
<dbReference type="InterPro" id="IPR005953">
    <property type="entry name" value="ATP_synth_csu_bac/chlpt"/>
</dbReference>
<dbReference type="InterPro" id="IPR000454">
    <property type="entry name" value="ATP_synth_F0_csu"/>
</dbReference>
<dbReference type="InterPro" id="IPR020537">
    <property type="entry name" value="ATP_synth_F0_csu_DDCD_BS"/>
</dbReference>
<dbReference type="InterPro" id="IPR038662">
    <property type="entry name" value="ATP_synth_F0_csu_sf"/>
</dbReference>
<dbReference type="InterPro" id="IPR002379">
    <property type="entry name" value="ATPase_proteolipid_c-like_dom"/>
</dbReference>
<dbReference type="InterPro" id="IPR035921">
    <property type="entry name" value="F/V-ATP_Csub_sf"/>
</dbReference>
<dbReference type="NCBIfam" id="TIGR01260">
    <property type="entry name" value="ATP_synt_c"/>
    <property type="match status" value="1"/>
</dbReference>
<dbReference type="NCBIfam" id="NF004532">
    <property type="entry name" value="PRK05880.1"/>
    <property type="match status" value="1"/>
</dbReference>
<dbReference type="Pfam" id="PF00137">
    <property type="entry name" value="ATP-synt_C"/>
    <property type="match status" value="1"/>
</dbReference>
<dbReference type="PRINTS" id="PR00124">
    <property type="entry name" value="ATPASEC"/>
</dbReference>
<dbReference type="SUPFAM" id="SSF81333">
    <property type="entry name" value="F1F0 ATP synthase subunit C"/>
    <property type="match status" value="1"/>
</dbReference>
<dbReference type="PROSITE" id="PS00605">
    <property type="entry name" value="ATPASE_C"/>
    <property type="match status" value="1"/>
</dbReference>